<dbReference type="EMBL" id="CP001048">
    <property type="protein sequence ID" value="ACC89493.1"/>
    <property type="molecule type" value="Genomic_DNA"/>
</dbReference>
<dbReference type="SMR" id="B2K730"/>
<dbReference type="ESTHER" id="yerpe-y1616">
    <property type="family name" value="abh_upf00227"/>
</dbReference>
<dbReference type="KEGG" id="ypb:YPTS_2532"/>
<dbReference type="PATRIC" id="fig|502801.10.peg.1945"/>
<dbReference type="Gene3D" id="3.40.50.1820">
    <property type="entry name" value="alpha/beta hydrolase"/>
    <property type="match status" value="1"/>
</dbReference>
<dbReference type="HAMAP" id="MF_01047">
    <property type="entry name" value="UPF0227"/>
    <property type="match status" value="1"/>
</dbReference>
<dbReference type="InterPro" id="IPR029058">
    <property type="entry name" value="AB_hydrolase_fold"/>
</dbReference>
<dbReference type="InterPro" id="IPR022987">
    <property type="entry name" value="UPF0227"/>
</dbReference>
<dbReference type="InterPro" id="IPR008886">
    <property type="entry name" value="UPF0227/Esterase_YqiA"/>
</dbReference>
<dbReference type="NCBIfam" id="NF003431">
    <property type="entry name" value="PRK04940.1"/>
    <property type="match status" value="1"/>
</dbReference>
<dbReference type="PANTHER" id="PTHR35602">
    <property type="entry name" value="ESTERASE YQIA-RELATED"/>
    <property type="match status" value="1"/>
</dbReference>
<dbReference type="PANTHER" id="PTHR35602:SF2">
    <property type="entry name" value="UPF0227 PROTEIN YCFP"/>
    <property type="match status" value="1"/>
</dbReference>
<dbReference type="Pfam" id="PF05728">
    <property type="entry name" value="UPF0227"/>
    <property type="match status" value="1"/>
</dbReference>
<dbReference type="SUPFAM" id="SSF53474">
    <property type="entry name" value="alpha/beta-Hydrolases"/>
    <property type="match status" value="1"/>
</dbReference>
<proteinExistence type="inferred from homology"/>
<organism>
    <name type="scientific">Yersinia pseudotuberculosis serotype IB (strain PB1/+)</name>
    <dbReference type="NCBI Taxonomy" id="502801"/>
    <lineage>
        <taxon>Bacteria</taxon>
        <taxon>Pseudomonadati</taxon>
        <taxon>Pseudomonadota</taxon>
        <taxon>Gammaproteobacteria</taxon>
        <taxon>Enterobacterales</taxon>
        <taxon>Yersiniaceae</taxon>
        <taxon>Yersinia</taxon>
    </lineage>
</organism>
<name>Y2532_YERPB</name>
<comment type="similarity">
    <text evidence="1">Belongs to the UPF0227 family.</text>
</comment>
<feature type="chain" id="PRO_1000136204" description="UPF0227 protein YPTS_2532">
    <location>
        <begin position="1"/>
        <end position="180"/>
    </location>
</feature>
<gene>
    <name type="ordered locus">YPTS_2532</name>
</gene>
<protein>
    <recommendedName>
        <fullName evidence="1">UPF0227 protein YPTS_2532</fullName>
    </recommendedName>
</protein>
<evidence type="ECO:0000255" key="1">
    <source>
        <dbReference type="HAMAP-Rule" id="MF_01047"/>
    </source>
</evidence>
<reference key="1">
    <citation type="submission" date="2008-04" db="EMBL/GenBank/DDBJ databases">
        <title>Complete sequence of Yersinia pseudotuberculosis PB1/+.</title>
        <authorList>
            <person name="Copeland A."/>
            <person name="Lucas S."/>
            <person name="Lapidus A."/>
            <person name="Glavina del Rio T."/>
            <person name="Dalin E."/>
            <person name="Tice H."/>
            <person name="Bruce D."/>
            <person name="Goodwin L."/>
            <person name="Pitluck S."/>
            <person name="Munk A.C."/>
            <person name="Brettin T."/>
            <person name="Detter J.C."/>
            <person name="Han C."/>
            <person name="Tapia R."/>
            <person name="Schmutz J."/>
            <person name="Larimer F."/>
            <person name="Land M."/>
            <person name="Hauser L."/>
            <person name="Challacombe J.F."/>
            <person name="Green L."/>
            <person name="Lindler L.E."/>
            <person name="Nikolich M.P."/>
            <person name="Richardson P."/>
        </authorList>
    </citation>
    <scope>NUCLEOTIDE SEQUENCE [LARGE SCALE GENOMIC DNA]</scope>
    <source>
        <strain>PB1/+</strain>
    </source>
</reference>
<sequence>MIVYLHGFDSNSPGNHEKVLQLQFIDPDVRFISYSTLHPRHDMQYLLKEVDKAIQQGGDEKSLICGVGLGGFWAERIGFLCGIRQVAFNPNLYPQENMSGKIDRPEEYIDIASKCIDGFREKNRDRCLVVLSRHDEMLDSQRTAGDLHPYYEIVWDDKQNHKFKDLSPHLQRIKAFKTLG</sequence>
<accession>B2K730</accession>